<proteinExistence type="evidence at transcript level"/>
<feature type="chain" id="PRO_0000141524" description="Small ribosomal subunit protein eS17">
    <location>
        <begin position="1"/>
        <end position="135"/>
    </location>
</feature>
<feature type="modified residue" description="N6-succinyllysine" evidence="2">
    <location>
        <position position="19"/>
    </location>
</feature>
<feature type="modified residue" description="Phosphoserine" evidence="1">
    <location>
        <position position="113"/>
    </location>
</feature>
<feature type="modified residue" description="Phosphothreonine" evidence="1">
    <location>
        <position position="130"/>
    </location>
</feature>
<feature type="cross-link" description="Glycyl lysine isopeptide (Lys-Gly) (interchain with G-Cter in SUMO1); alternate" evidence="1">
    <location>
        <position position="103"/>
    </location>
</feature>
<feature type="cross-link" description="Glycyl lysine isopeptide (Lys-Gly) (interchain with G-Cter in SUMO2); alternate" evidence="1">
    <location>
        <position position="103"/>
    </location>
</feature>
<sequence length="135" mass="15524">MGRVRTKTVKKAARVIIEKYYTRLGNDFHTNKRVCEEIAIIPSKKLRNKIAGYVTHLMKRIQRGPVRGISIKLQEEERERRDNYVPEVSALDQEIIEVDPDTKEMLKLLDFGSLSNLQVTQPTVGMNFKTPRGAV</sequence>
<name>RS17_FELCA</name>
<protein>
    <recommendedName>
        <fullName evidence="3">Small ribosomal subunit protein eS17</fullName>
    </recommendedName>
    <alternativeName>
        <fullName>40S ribosomal protein S17</fullName>
    </alternativeName>
</protein>
<gene>
    <name type="primary">RPS17</name>
</gene>
<organism>
    <name type="scientific">Felis catus</name>
    <name type="common">Cat</name>
    <name type="synonym">Felis silvestris catus</name>
    <dbReference type="NCBI Taxonomy" id="9685"/>
    <lineage>
        <taxon>Eukaryota</taxon>
        <taxon>Metazoa</taxon>
        <taxon>Chordata</taxon>
        <taxon>Craniata</taxon>
        <taxon>Vertebrata</taxon>
        <taxon>Euteleostomi</taxon>
        <taxon>Mammalia</taxon>
        <taxon>Eutheria</taxon>
        <taxon>Laurasiatheria</taxon>
        <taxon>Carnivora</taxon>
        <taxon>Feliformia</taxon>
        <taxon>Felidae</taxon>
        <taxon>Felinae</taxon>
        <taxon>Felis</taxon>
    </lineage>
</organism>
<evidence type="ECO:0000250" key="1">
    <source>
        <dbReference type="UniProtKB" id="P08708"/>
    </source>
</evidence>
<evidence type="ECO:0000250" key="2">
    <source>
        <dbReference type="UniProtKB" id="P63276"/>
    </source>
</evidence>
<evidence type="ECO:0000305" key="3"/>
<dbReference type="EMBL" id="U22230">
    <property type="protein sequence ID" value="AAB01668.1"/>
    <property type="molecule type" value="mRNA"/>
</dbReference>
<dbReference type="PIR" id="PC4160">
    <property type="entry name" value="PC4160"/>
</dbReference>
<dbReference type="RefSeq" id="XP_003986833.1">
    <property type="nucleotide sequence ID" value="XM_003986784.4"/>
</dbReference>
<dbReference type="SMR" id="P63275"/>
<dbReference type="FunCoup" id="P63275">
    <property type="interactions" value="103"/>
</dbReference>
<dbReference type="STRING" id="9685.ENSFCAP00000002177"/>
<dbReference type="PaxDb" id="9685-ENSFCAP00000002177"/>
<dbReference type="Ensembl" id="ENSFCAT00000002359.5">
    <property type="protein sequence ID" value="ENSFCAP00000002177.2"/>
    <property type="gene ID" value="ENSFCAG00000002358.5"/>
</dbReference>
<dbReference type="GeneID" id="751111"/>
<dbReference type="KEGG" id="fca:751111"/>
<dbReference type="CTD" id="6218"/>
<dbReference type="VGNC" id="VGNC:104713">
    <property type="gene designation" value="RPS17"/>
</dbReference>
<dbReference type="eggNOG" id="KOG0187">
    <property type="taxonomic scope" value="Eukaryota"/>
</dbReference>
<dbReference type="GeneTree" id="ENSGT00390000006548"/>
<dbReference type="HOGENOM" id="CLU_112958_1_1_1"/>
<dbReference type="InParanoid" id="P63275"/>
<dbReference type="OMA" id="HTEHIEV"/>
<dbReference type="OrthoDB" id="1727351at2759"/>
<dbReference type="TreeFam" id="TF317992"/>
<dbReference type="Proteomes" id="UP000011712">
    <property type="component" value="Chromosome B3"/>
</dbReference>
<dbReference type="Bgee" id="ENSFCAG00000002358">
    <property type="expression patterns" value="Expressed in uterus and 10 other cell types or tissues"/>
</dbReference>
<dbReference type="GO" id="GO:0022626">
    <property type="term" value="C:cytosolic ribosome"/>
    <property type="evidence" value="ECO:0007669"/>
    <property type="project" value="UniProtKB-ARBA"/>
</dbReference>
<dbReference type="GO" id="GO:0005730">
    <property type="term" value="C:nucleolus"/>
    <property type="evidence" value="ECO:0007669"/>
    <property type="project" value="UniProtKB-SubCell"/>
</dbReference>
<dbReference type="GO" id="GO:0032040">
    <property type="term" value="C:small-subunit processome"/>
    <property type="evidence" value="ECO:0000250"/>
    <property type="project" value="UniProtKB"/>
</dbReference>
<dbReference type="GO" id="GO:0003735">
    <property type="term" value="F:structural constituent of ribosome"/>
    <property type="evidence" value="ECO:0007669"/>
    <property type="project" value="InterPro"/>
</dbReference>
<dbReference type="GO" id="GO:0042274">
    <property type="term" value="P:ribosomal small subunit biogenesis"/>
    <property type="evidence" value="ECO:0000250"/>
    <property type="project" value="UniProtKB"/>
</dbReference>
<dbReference type="GO" id="GO:0006412">
    <property type="term" value="P:translation"/>
    <property type="evidence" value="ECO:0007669"/>
    <property type="project" value="InterPro"/>
</dbReference>
<dbReference type="FunFam" id="1.10.60.20:FF:000001">
    <property type="entry name" value="40S ribosomal protein S17"/>
    <property type="match status" value="1"/>
</dbReference>
<dbReference type="Gene3D" id="1.10.60.20">
    <property type="entry name" value="Ribosomal protein S17e-like"/>
    <property type="match status" value="1"/>
</dbReference>
<dbReference type="HAMAP" id="MF_00511">
    <property type="entry name" value="Ribosomal_eS17"/>
    <property type="match status" value="1"/>
</dbReference>
<dbReference type="InterPro" id="IPR001210">
    <property type="entry name" value="Ribosomal_eS17"/>
</dbReference>
<dbReference type="InterPro" id="IPR018273">
    <property type="entry name" value="Ribosomal_eS17_CS"/>
</dbReference>
<dbReference type="InterPro" id="IPR036401">
    <property type="entry name" value="Ribosomal_eS17_sf"/>
</dbReference>
<dbReference type="NCBIfam" id="NF002242">
    <property type="entry name" value="PRK01151.1"/>
    <property type="match status" value="1"/>
</dbReference>
<dbReference type="PANTHER" id="PTHR10732">
    <property type="entry name" value="40S RIBOSOMAL PROTEIN S17"/>
    <property type="match status" value="1"/>
</dbReference>
<dbReference type="PANTHER" id="PTHR10732:SF0">
    <property type="entry name" value="40S RIBOSOMAL PROTEIN S17"/>
    <property type="match status" value="1"/>
</dbReference>
<dbReference type="Pfam" id="PF00833">
    <property type="entry name" value="Ribosomal_S17e"/>
    <property type="match status" value="1"/>
</dbReference>
<dbReference type="SUPFAM" id="SSF116820">
    <property type="entry name" value="Rps17e-like"/>
    <property type="match status" value="1"/>
</dbReference>
<dbReference type="PROSITE" id="PS00712">
    <property type="entry name" value="RIBOSOMAL_S17E"/>
    <property type="match status" value="1"/>
</dbReference>
<reference key="1">
    <citation type="journal article" date="1996" name="Biochem. Biophys. Res. Commun.">
        <title>Primary sequence and evolutionary conservation of ribosomal protein genes from the domestic cat.</title>
        <authorList>
            <person name="Starkey C.R."/>
            <person name="Menon R.P."/>
            <person name="Prabhu S."/>
            <person name="Levy L.S."/>
        </authorList>
    </citation>
    <scope>NUCLEOTIDE SEQUENCE [MRNA]</scope>
    <source>
        <tissue>Thymic lymphoma</tissue>
    </source>
</reference>
<keyword id="KW-0963">Cytoplasm</keyword>
<keyword id="KW-1017">Isopeptide bond</keyword>
<keyword id="KW-0539">Nucleus</keyword>
<keyword id="KW-0597">Phosphoprotein</keyword>
<keyword id="KW-1185">Reference proteome</keyword>
<keyword id="KW-0687">Ribonucleoprotein</keyword>
<keyword id="KW-0689">Ribosomal protein</keyword>
<keyword id="KW-0832">Ubl conjugation</keyword>
<accession>P63275</accession>
<accession>P06584</accession>
<comment type="function">
    <text evidence="1">Component of the small ribosomal subunit. The ribosome is a large ribonucleoprotein complex responsible for the synthesis of proteins in the cell. Part of the small subunit (SSU) processome, first precursor of the small eukaryotic ribosomal subunit. During the assembly of the SSU processome in the nucleolus, many ribosome biogenesis factors, an RNA chaperone and ribosomal proteins associate with the nascent pre-rRNA and work in concert to generate RNA folding, modifications, rearrangements and cleavage as well as targeted degradation of pre-ribosomal RNA by the RNA exosome.</text>
</comment>
<comment type="subunit">
    <text evidence="1">Component of the small ribosomal subunit. Part of the small subunit (SSU) processome, composed of more than 70 proteins and the RNA chaperone small nucleolar RNA (snoRNA) U3.</text>
</comment>
<comment type="subcellular location">
    <subcellularLocation>
        <location evidence="1">Cytoplasm</location>
    </subcellularLocation>
    <subcellularLocation>
        <location evidence="1">Nucleus</location>
        <location evidence="1">Nucleolus</location>
    </subcellularLocation>
</comment>
<comment type="PTM">
    <text evidence="1">Ubiquitinated at Lys-103 by RNF14 and RNF25 in response to ribosome collisions (ribosome stalling).</text>
</comment>
<comment type="similarity">
    <text evidence="3">Belongs to the eukaryotic ribosomal protein eS17 family.</text>
</comment>